<evidence type="ECO:0000269" key="1">
    <source>
    </source>
</evidence>
<evidence type="ECO:0000269" key="2">
    <source>
    </source>
</evidence>
<evidence type="ECO:0000303" key="3">
    <source>
    </source>
</evidence>
<evidence type="ECO:0000303" key="4">
    <source>
    </source>
</evidence>
<evidence type="ECO:0000303" key="5">
    <source>
    </source>
</evidence>
<evidence type="ECO:0000305" key="6"/>
<reference key="1">
    <citation type="journal article" date="1993" name="J. Bacteriol.">
        <title>Genetic and molecular analyses of the C-terminal region of the recE gene from the Rac prophage of Escherichia coli K-12 reveal the recT gene.</title>
        <authorList>
            <person name="Clark A.J."/>
            <person name="Sharma V."/>
            <person name="Brenowitz S."/>
            <person name="Chu C.C."/>
            <person name="Sandler S.J."/>
            <person name="Satin L."/>
            <person name="Templin A."/>
            <person name="Berger I."/>
            <person name="Cohen A."/>
        </authorList>
    </citation>
    <scope>NUCLEOTIDE SEQUENCE [GENOMIC DNA]</scope>
    <source>
        <strain>K12</strain>
    </source>
</reference>
<reference key="2">
    <citation type="journal article" date="1996" name="DNA Res.">
        <title>A 570-kb DNA sequence of the Escherichia coli K-12 genome corresponding to the 28.0-40.1 min region on the linkage map.</title>
        <authorList>
            <person name="Aiba H."/>
            <person name="Baba T."/>
            <person name="Fujita K."/>
            <person name="Hayashi K."/>
            <person name="Inada T."/>
            <person name="Isono K."/>
            <person name="Itoh T."/>
            <person name="Kasai H."/>
            <person name="Kashimoto K."/>
            <person name="Kimura S."/>
            <person name="Kitakawa M."/>
            <person name="Kitagawa M."/>
            <person name="Makino K."/>
            <person name="Miki T."/>
            <person name="Mizobuchi K."/>
            <person name="Mori H."/>
            <person name="Mori T."/>
            <person name="Motomura K."/>
            <person name="Nakade S."/>
            <person name="Nakamura Y."/>
            <person name="Nashimoto H."/>
            <person name="Nishio Y."/>
            <person name="Oshima T."/>
            <person name="Saito N."/>
            <person name="Sampei G."/>
            <person name="Seki Y."/>
            <person name="Sivasundaram S."/>
            <person name="Tagami H."/>
            <person name="Takeda J."/>
            <person name="Takemoto K."/>
            <person name="Takeuchi Y."/>
            <person name="Wada C."/>
            <person name="Yamamoto Y."/>
            <person name="Horiuchi T."/>
        </authorList>
    </citation>
    <scope>NUCLEOTIDE SEQUENCE [LARGE SCALE GENOMIC DNA]</scope>
    <source>
        <strain>K12 / W3110 / ATCC 27325 / DSM 5911</strain>
    </source>
</reference>
<reference key="3">
    <citation type="journal article" date="1997" name="Science">
        <title>The complete genome sequence of Escherichia coli K-12.</title>
        <authorList>
            <person name="Blattner F.R."/>
            <person name="Plunkett G. III"/>
            <person name="Bloch C.A."/>
            <person name="Perna N.T."/>
            <person name="Burland V."/>
            <person name="Riley M."/>
            <person name="Collado-Vides J."/>
            <person name="Glasner J.D."/>
            <person name="Rode C.K."/>
            <person name="Mayhew G.F."/>
            <person name="Gregor J."/>
            <person name="Davis N.W."/>
            <person name="Kirkpatrick H.A."/>
            <person name="Goeden M.A."/>
            <person name="Rose D.J."/>
            <person name="Mau B."/>
            <person name="Shao Y."/>
        </authorList>
    </citation>
    <scope>NUCLEOTIDE SEQUENCE [LARGE SCALE GENOMIC DNA]</scope>
    <source>
        <strain>K12 / MG1655 / ATCC 47076</strain>
    </source>
</reference>
<reference key="4">
    <citation type="journal article" date="2006" name="Mol. Syst. Biol.">
        <title>Highly accurate genome sequences of Escherichia coli K-12 strains MG1655 and W3110.</title>
        <authorList>
            <person name="Hayashi K."/>
            <person name="Morooka N."/>
            <person name="Yamamoto Y."/>
            <person name="Fujita K."/>
            <person name="Isono K."/>
            <person name="Choi S."/>
            <person name="Ohtsubo E."/>
            <person name="Baba T."/>
            <person name="Wanner B.L."/>
            <person name="Mori H."/>
            <person name="Horiuchi T."/>
        </authorList>
    </citation>
    <scope>NUCLEOTIDE SEQUENCE [LARGE SCALE GENOMIC DNA]</scope>
    <source>
        <strain>K12 / W3110 / ATCC 27325 / DSM 5911</strain>
    </source>
</reference>
<reference key="5">
    <citation type="journal article" date="1995" name="Mol. Microbiol.">
        <title>Restriction alleviation and modification enhancement by the Rac prophage of Escherichia coli K-12.</title>
        <authorList>
            <person name="King G."/>
            <person name="Murray N.E."/>
        </authorList>
    </citation>
    <scope>FUNCTION</scope>
</reference>
<reference key="6">
    <citation type="journal article" date="2014" name="Nucleic Acids Res.">
        <title>RalR (a DNase) and RalA (a small RNA) form a type I toxin-antitoxin system in Escherichia coli.</title>
        <authorList>
            <person name="Guo Y."/>
            <person name="Quiroga C."/>
            <person name="Chen Q."/>
            <person name="McAnulty M.J."/>
            <person name="Benedik M.J."/>
            <person name="Wood T.K."/>
            <person name="Wang X."/>
        </authorList>
    </citation>
    <scope>FUNCTION</scope>
    <scope>COFACTOR</scope>
    <scope>ACTIVITY REGULATION</scope>
    <scope>INDUCTION</scope>
    <scope>DISRUPTION PHENOTYPE</scope>
    <scope>ANTIBIOTIC RESISTANCE</scope>
    <scope>MUTAGENESIS OF LYS-52 AND 43-GLU--ALA-46</scope>
    <source>
        <strain>K12 / BW25113</strain>
    </source>
</reference>
<feature type="chain" id="PRO_0000084360" description="Endodeoxyribonuclease toxin RalR">
    <location>
        <begin position="1"/>
        <end position="64"/>
    </location>
</feature>
<feature type="mutagenesis site" description="No longer inhibits growth." evidence="1">
    <original>EKEA</original>
    <variation>AIAE</variation>
    <location>
        <begin position="43"/>
        <end position="46"/>
    </location>
</feature>
<feature type="mutagenesis site" description="No longer inhibits growth, has no DNase activity." evidence="1">
    <original>K</original>
    <variation>E</variation>
    <location>
        <position position="52"/>
    </location>
</feature>
<dbReference type="EC" id="3.1.-.-"/>
<dbReference type="EMBL" id="L23927">
    <property type="protein sequence ID" value="AAA16180.1"/>
    <property type="status" value="ALT_INIT"/>
    <property type="molecule type" value="Unassigned_DNA"/>
</dbReference>
<dbReference type="EMBL" id="U00096">
    <property type="protein sequence ID" value="AAC74430.1"/>
    <property type="molecule type" value="Genomic_DNA"/>
</dbReference>
<dbReference type="EMBL" id="AP009048">
    <property type="protein sequence ID" value="BAA14948.1"/>
    <property type="molecule type" value="Genomic_DNA"/>
</dbReference>
<dbReference type="PIR" id="G64884">
    <property type="entry name" value="G64884"/>
</dbReference>
<dbReference type="RefSeq" id="NP_415864.1">
    <property type="nucleotide sequence ID" value="NC_000913.3"/>
</dbReference>
<dbReference type="RefSeq" id="WP_001317028.1">
    <property type="nucleotide sequence ID" value="NZ_SSUR01000011.1"/>
</dbReference>
<dbReference type="SMR" id="P33229"/>
<dbReference type="BioGRID" id="4261586">
    <property type="interactions" value="140"/>
</dbReference>
<dbReference type="FunCoup" id="P33229">
    <property type="interactions" value="151"/>
</dbReference>
<dbReference type="STRING" id="511145.b1348"/>
<dbReference type="PaxDb" id="511145-b1348"/>
<dbReference type="EnsemblBacteria" id="AAC74430">
    <property type="protein sequence ID" value="AAC74430"/>
    <property type="gene ID" value="b1348"/>
</dbReference>
<dbReference type="GeneID" id="945914"/>
<dbReference type="KEGG" id="ecj:JW5208"/>
<dbReference type="KEGG" id="eco:b1348"/>
<dbReference type="KEGG" id="ecoc:C3026_07895"/>
<dbReference type="PATRIC" id="fig|83333.113.peg.1370"/>
<dbReference type="EchoBASE" id="EB1845"/>
<dbReference type="eggNOG" id="ENOG50349DV">
    <property type="taxonomic scope" value="Bacteria"/>
</dbReference>
<dbReference type="HOGENOM" id="CLU_207096_0_0_6"/>
<dbReference type="InParanoid" id="P33229"/>
<dbReference type="OMA" id="KIMRYDN"/>
<dbReference type="OrthoDB" id="6631093at2"/>
<dbReference type="BioCyc" id="EcoCyc:EG11900-MONOMER"/>
<dbReference type="BioCyc" id="MetaCyc:EG11900-MONOMER"/>
<dbReference type="PRO" id="PR:P33229"/>
<dbReference type="Proteomes" id="UP000000625">
    <property type="component" value="Chromosome"/>
</dbReference>
<dbReference type="GO" id="GO:1990238">
    <property type="term" value="F:double-stranded DNA endonuclease activity"/>
    <property type="evidence" value="ECO:0000314"/>
    <property type="project" value="EcoCyc"/>
</dbReference>
<dbReference type="GO" id="GO:0009307">
    <property type="term" value="P:DNA restriction-modification system"/>
    <property type="evidence" value="ECO:0007669"/>
    <property type="project" value="UniProtKB-KW"/>
</dbReference>
<dbReference type="GO" id="GO:0046677">
    <property type="term" value="P:response to antibiotic"/>
    <property type="evidence" value="ECO:0007669"/>
    <property type="project" value="UniProtKB-KW"/>
</dbReference>
<dbReference type="InterPro" id="IPR019908">
    <property type="entry name" value="Toxin_RalR"/>
</dbReference>
<dbReference type="NCBIfam" id="TIGR03655">
    <property type="entry name" value="anti_R_Lar"/>
    <property type="match status" value="1"/>
</dbReference>
<dbReference type="NCBIfam" id="NF007260">
    <property type="entry name" value="PRK09710.1"/>
    <property type="match status" value="1"/>
</dbReference>
<dbReference type="Pfam" id="PF14354">
    <property type="entry name" value="Lar_restr_allev"/>
    <property type="match status" value="1"/>
</dbReference>
<comment type="function">
    <text evidence="1 2">Toxic component of a type I toxin-antitoxin (TA) system. Upon overexpression inhibits growth and reduces colony-forming units in both the presence and absence of the Rac prophage, cells become filamentous. Has deoxyribonuclease activity (probably endonucleolytic), does not digest RNA. Its toxic effects are neutralized by sRNA antitoxin RalA, which is encoded in trans on the opposite DNA strand (PubMed:24748661). Has RAL-like activity (PubMed:7476171).</text>
</comment>
<comment type="cofactor">
    <cofactor evidence="1">
        <name>Ca(2+)</name>
        <dbReference type="ChEBI" id="CHEBI:29108"/>
    </cofactor>
</comment>
<comment type="cofactor">
    <cofactor evidence="1">
        <name>Mg(2+)</name>
        <dbReference type="ChEBI" id="CHEBI:18420"/>
    </cofactor>
</comment>
<comment type="activity regulation">
    <text evidence="1">Inhibited by EDTA.</text>
</comment>
<comment type="induction">
    <text evidence="1">The sRNA antitoxin RalA probably works by inhibiting translation of the RalR mRNA. The ability of RalA to block the toxicity of RalR relies on a 16-nt sequence which is complementary to a section of the RalR coding region; in the presence of RalA sRNA decreased amounts of RalR protein accumulate with no significant changes in the level of RalR RNA.</text>
</comment>
<comment type="disruption phenotype">
    <text evidence="1">The single ralR and double ralR-ralA mutant have increased sensitivity to the antibiotic fosfomycin.</text>
</comment>
<comment type="miscellaneous">
    <text evidence="5">This protein is encoded on the Rac prophage.</text>
</comment>
<comment type="sequence caution" evidence="6">
    <conflict type="erroneous initiation">
        <sequence resource="EMBL-CDS" id="AAA16180"/>
    </conflict>
    <text>Extended N-terminus.</text>
</comment>
<name>RALR_ECOLI</name>
<proteinExistence type="evidence at protein level"/>
<protein>
    <recommendedName>
        <fullName evidence="3">Endodeoxyribonuclease toxin RalR</fullName>
        <shortName evidence="3">DNase RalR</shortName>
        <ecNumber>3.1.-.-</ecNumber>
    </recommendedName>
    <alternativeName>
        <fullName evidence="4">Restriction alleviation and modification enhancement protein</fullName>
    </alternativeName>
    <alternativeName>
        <fullName evidence="3">Toxin RalR</fullName>
    </alternativeName>
</protein>
<accession>P33229</accession>
<sequence>MRYDNVKPCPFCGCPSVTVKAISGYYRAKCNGCESRTGYGGSEKEALERWNKRTTGNNNGGVHV</sequence>
<organism>
    <name type="scientific">Escherichia coli (strain K12)</name>
    <dbReference type="NCBI Taxonomy" id="83333"/>
    <lineage>
        <taxon>Bacteria</taxon>
        <taxon>Pseudomonadati</taxon>
        <taxon>Pseudomonadota</taxon>
        <taxon>Gammaproteobacteria</taxon>
        <taxon>Enterobacterales</taxon>
        <taxon>Enterobacteriaceae</taxon>
        <taxon>Escherichia</taxon>
    </lineage>
</organism>
<gene>
    <name type="primary">ralR</name>
    <name evidence="4" type="synonym">lar</name>
    <name type="synonym">ral</name>
    <name type="synonym">ydaB</name>
    <name type="ordered locus">b1348</name>
    <name type="ordered locus">JW5208</name>
</gene>
<keyword id="KW-0046">Antibiotic resistance</keyword>
<keyword id="KW-0106">Calcium</keyword>
<keyword id="KW-0255">Endonuclease</keyword>
<keyword id="KW-0378">Hydrolase</keyword>
<keyword id="KW-0460">Magnesium</keyword>
<keyword id="KW-0540">Nuclease</keyword>
<keyword id="KW-1185">Reference proteome</keyword>
<keyword id="KW-0680">Restriction system</keyword>
<keyword id="KW-1277">Toxin-antitoxin system</keyword>